<keyword id="KW-0067">ATP-binding</keyword>
<keyword id="KW-0963">Cytoplasm</keyword>
<keyword id="KW-0347">Helicase</keyword>
<keyword id="KW-0378">Hydrolase</keyword>
<keyword id="KW-0396">Initiation factor</keyword>
<keyword id="KW-0547">Nucleotide-binding</keyword>
<keyword id="KW-0648">Protein biosynthesis</keyword>
<keyword id="KW-1185">Reference proteome</keyword>
<keyword id="KW-0694">RNA-binding</keyword>
<proteinExistence type="inferred from homology"/>
<sequence length="398" mass="44938">MASNDKGLEEIPEGQIESNYDEITDSFDSMELKPELLRGIYAYGFERPSAIQQRAILPIIKGNDVIAQAQSGTGKTATFSISALQKLDPNVKGCQALILAPTRELAQQIQKVVVAIGDFMNIECHACIGGTNVREDMKALQEGPQVVVGTPGRVQDMIQRRVLRTDNLKMFILDEADEMLSRGFTEQIYDIFQLLPQSTQVVLLSATMPQDVLEVTTKFMRDPVRILVKKQELTLEGIKQFYIAVEKEEWKLDTLSDLYETVTITQAVIFCNTRRKVDWLTDKLTARDFTVSAMHGDMEQAQRDVIMKEFRSGSSRVLIATDLLARGIDVQQVSLVINYDLPANRENYIHRIGRGGRFGRKGVAINFVTADDVRMMREIEQFYSTQIEEMPMNVADLI</sequence>
<comment type="function">
    <text evidence="1">ATP-dependent RNA helicase which is a subunit of the eIF4F complex involved in cap recognition and is required for mRNA binding to ribosome. In the current model of translation initiation, eIF4A unwinds RNA secondary structures in the 5'-UTR of mRNAs which is necessary to allow efficient binding of the small ribosomal subunit, and subsequent scanning for the initiator codon (By similarity).</text>
</comment>
<comment type="catalytic activity">
    <reaction>
        <text>ATP + H2O = ADP + phosphate + H(+)</text>
        <dbReference type="Rhea" id="RHEA:13065"/>
        <dbReference type="ChEBI" id="CHEBI:15377"/>
        <dbReference type="ChEBI" id="CHEBI:15378"/>
        <dbReference type="ChEBI" id="CHEBI:30616"/>
        <dbReference type="ChEBI" id="CHEBI:43474"/>
        <dbReference type="ChEBI" id="CHEBI:456216"/>
        <dbReference type="EC" id="3.6.4.13"/>
    </reaction>
</comment>
<comment type="subunit">
    <text evidence="1">Component of the eIF4F complex, which composition varies with external and internal environmental conditions. It is composed of at least eIF4A, eIF4E and eIF4G (By similarity).</text>
</comment>
<comment type="subcellular location">
    <subcellularLocation>
        <location evidence="1">Cytoplasm</location>
    </subcellularLocation>
</comment>
<comment type="domain">
    <text>The Q motif is unique to and characteristic of the DEAD box family of RNA helicases and controls ATP binding and hydrolysis.</text>
</comment>
<comment type="similarity">
    <text evidence="4">Belongs to the DEAD box helicase family. eIF4A subfamily.</text>
</comment>
<protein>
    <recommendedName>
        <fullName>ATP-dependent RNA helicase eIF4A</fullName>
        <ecNumber>3.6.4.13</ecNumber>
    </recommendedName>
    <alternativeName>
        <fullName>Eukaryotic initiation factor 4A</fullName>
        <shortName>eIF-4A</shortName>
    </alternativeName>
    <alternativeName>
        <fullName>Translation initiation factor 1</fullName>
    </alternativeName>
</protein>
<evidence type="ECO:0000250" key="1"/>
<evidence type="ECO:0000255" key="2">
    <source>
        <dbReference type="PROSITE-ProRule" id="PRU00541"/>
    </source>
</evidence>
<evidence type="ECO:0000255" key="3">
    <source>
        <dbReference type="PROSITE-ProRule" id="PRU00542"/>
    </source>
</evidence>
<evidence type="ECO:0000305" key="4"/>
<name>IF4A_NEOFI</name>
<feature type="chain" id="PRO_0000281685" description="ATP-dependent RNA helicase eIF4A">
    <location>
        <begin position="1"/>
        <end position="398"/>
    </location>
</feature>
<feature type="domain" description="Helicase ATP-binding" evidence="2">
    <location>
        <begin position="56"/>
        <end position="226"/>
    </location>
</feature>
<feature type="domain" description="Helicase C-terminal" evidence="3">
    <location>
        <begin position="237"/>
        <end position="398"/>
    </location>
</feature>
<feature type="short sequence motif" description="Q motif">
    <location>
        <begin position="25"/>
        <end position="53"/>
    </location>
</feature>
<feature type="short sequence motif" description="DEAD box">
    <location>
        <begin position="174"/>
        <end position="177"/>
    </location>
</feature>
<feature type="binding site" evidence="2">
    <location>
        <begin position="69"/>
        <end position="76"/>
    </location>
    <ligand>
        <name>ATP</name>
        <dbReference type="ChEBI" id="CHEBI:30616"/>
    </ligand>
</feature>
<accession>A1D7N3</accession>
<reference key="1">
    <citation type="journal article" date="2008" name="PLoS Genet.">
        <title>Genomic islands in the pathogenic filamentous fungus Aspergillus fumigatus.</title>
        <authorList>
            <person name="Fedorova N.D."/>
            <person name="Khaldi N."/>
            <person name="Joardar V.S."/>
            <person name="Maiti R."/>
            <person name="Amedeo P."/>
            <person name="Anderson M.J."/>
            <person name="Crabtree J."/>
            <person name="Silva J.C."/>
            <person name="Badger J.H."/>
            <person name="Albarraq A."/>
            <person name="Angiuoli S."/>
            <person name="Bussey H."/>
            <person name="Bowyer P."/>
            <person name="Cotty P.J."/>
            <person name="Dyer P.S."/>
            <person name="Egan A."/>
            <person name="Galens K."/>
            <person name="Fraser-Liggett C.M."/>
            <person name="Haas B.J."/>
            <person name="Inman J.M."/>
            <person name="Kent R."/>
            <person name="Lemieux S."/>
            <person name="Malavazi I."/>
            <person name="Orvis J."/>
            <person name="Roemer T."/>
            <person name="Ronning C.M."/>
            <person name="Sundaram J.P."/>
            <person name="Sutton G."/>
            <person name="Turner G."/>
            <person name="Venter J.C."/>
            <person name="White O.R."/>
            <person name="Whitty B.R."/>
            <person name="Youngman P."/>
            <person name="Wolfe K.H."/>
            <person name="Goldman G.H."/>
            <person name="Wortman J.R."/>
            <person name="Jiang B."/>
            <person name="Denning D.W."/>
            <person name="Nierman W.C."/>
        </authorList>
    </citation>
    <scope>NUCLEOTIDE SEQUENCE [LARGE SCALE GENOMIC DNA]</scope>
    <source>
        <strain>ATCC 1020 / DSM 3700 / CBS 544.65 / FGSC A1164 / JCM 1740 / NRRL 181 / WB 181</strain>
    </source>
</reference>
<organism>
    <name type="scientific">Neosartorya fischeri (strain ATCC 1020 / DSM 3700 / CBS 544.65 / FGSC A1164 / JCM 1740 / NRRL 181 / WB 181)</name>
    <name type="common">Aspergillus fischerianus</name>
    <dbReference type="NCBI Taxonomy" id="331117"/>
    <lineage>
        <taxon>Eukaryota</taxon>
        <taxon>Fungi</taxon>
        <taxon>Dikarya</taxon>
        <taxon>Ascomycota</taxon>
        <taxon>Pezizomycotina</taxon>
        <taxon>Eurotiomycetes</taxon>
        <taxon>Eurotiomycetidae</taxon>
        <taxon>Eurotiales</taxon>
        <taxon>Aspergillaceae</taxon>
        <taxon>Aspergillus</taxon>
        <taxon>Aspergillus subgen. Fumigati</taxon>
    </lineage>
</organism>
<gene>
    <name type="primary">tif1</name>
    <name type="synonym">tif41</name>
    <name type="ORF">NFIA_068980</name>
</gene>
<dbReference type="EC" id="3.6.4.13"/>
<dbReference type="EMBL" id="DS027690">
    <property type="protein sequence ID" value="EAW21727.1"/>
    <property type="molecule type" value="Genomic_DNA"/>
</dbReference>
<dbReference type="RefSeq" id="XP_001263624.1">
    <property type="nucleotide sequence ID" value="XM_001263623.1"/>
</dbReference>
<dbReference type="SMR" id="A1D7N3"/>
<dbReference type="STRING" id="331117.A1D7N3"/>
<dbReference type="EnsemblFungi" id="EAW21727">
    <property type="protein sequence ID" value="EAW21727"/>
    <property type="gene ID" value="NFIA_068980"/>
</dbReference>
<dbReference type="GeneID" id="4590270"/>
<dbReference type="KEGG" id="nfi:NFIA_068980"/>
<dbReference type="VEuPathDB" id="FungiDB:NFIA_068980"/>
<dbReference type="eggNOG" id="KOG0327">
    <property type="taxonomic scope" value="Eukaryota"/>
</dbReference>
<dbReference type="HOGENOM" id="CLU_003041_1_0_1"/>
<dbReference type="OMA" id="FGCQALV"/>
<dbReference type="OrthoDB" id="10265785at2759"/>
<dbReference type="Proteomes" id="UP000006702">
    <property type="component" value="Unassembled WGS sequence"/>
</dbReference>
<dbReference type="GO" id="GO:0005737">
    <property type="term" value="C:cytoplasm"/>
    <property type="evidence" value="ECO:0007669"/>
    <property type="project" value="UniProtKB-SubCell"/>
</dbReference>
<dbReference type="GO" id="GO:0005524">
    <property type="term" value="F:ATP binding"/>
    <property type="evidence" value="ECO:0007669"/>
    <property type="project" value="UniProtKB-KW"/>
</dbReference>
<dbReference type="GO" id="GO:0016887">
    <property type="term" value="F:ATP hydrolysis activity"/>
    <property type="evidence" value="ECO:0007669"/>
    <property type="project" value="RHEA"/>
</dbReference>
<dbReference type="GO" id="GO:0003723">
    <property type="term" value="F:RNA binding"/>
    <property type="evidence" value="ECO:0007669"/>
    <property type="project" value="UniProtKB-KW"/>
</dbReference>
<dbReference type="GO" id="GO:0003724">
    <property type="term" value="F:RNA helicase activity"/>
    <property type="evidence" value="ECO:0007669"/>
    <property type="project" value="UniProtKB-EC"/>
</dbReference>
<dbReference type="GO" id="GO:0003743">
    <property type="term" value="F:translation initiation factor activity"/>
    <property type="evidence" value="ECO:0007669"/>
    <property type="project" value="UniProtKB-KW"/>
</dbReference>
<dbReference type="GO" id="GO:0002183">
    <property type="term" value="P:cytoplasmic translational initiation"/>
    <property type="evidence" value="ECO:0007669"/>
    <property type="project" value="EnsemblFungi"/>
</dbReference>
<dbReference type="CDD" id="cd18046">
    <property type="entry name" value="DEADc_EIF4AII_EIF4AI_DDX2"/>
    <property type="match status" value="1"/>
</dbReference>
<dbReference type="CDD" id="cd18787">
    <property type="entry name" value="SF2_C_DEAD"/>
    <property type="match status" value="1"/>
</dbReference>
<dbReference type="FunFam" id="3.40.50.300:FF:000089">
    <property type="entry name" value="Eukaryotic initiation factor 4A-II"/>
    <property type="match status" value="1"/>
</dbReference>
<dbReference type="FunFam" id="3.40.50.300:FF:000031">
    <property type="entry name" value="Eukaryotic initiation factor 4A-III"/>
    <property type="match status" value="1"/>
</dbReference>
<dbReference type="Gene3D" id="3.40.50.300">
    <property type="entry name" value="P-loop containing nucleotide triphosphate hydrolases"/>
    <property type="match status" value="2"/>
</dbReference>
<dbReference type="InterPro" id="IPR011545">
    <property type="entry name" value="DEAD/DEAH_box_helicase_dom"/>
</dbReference>
<dbReference type="InterPro" id="IPR044728">
    <property type="entry name" value="EIF4A_DEADc"/>
</dbReference>
<dbReference type="InterPro" id="IPR014001">
    <property type="entry name" value="Helicase_ATP-bd"/>
</dbReference>
<dbReference type="InterPro" id="IPR001650">
    <property type="entry name" value="Helicase_C-like"/>
</dbReference>
<dbReference type="InterPro" id="IPR027417">
    <property type="entry name" value="P-loop_NTPase"/>
</dbReference>
<dbReference type="InterPro" id="IPR000629">
    <property type="entry name" value="RNA-helicase_DEAD-box_CS"/>
</dbReference>
<dbReference type="InterPro" id="IPR014014">
    <property type="entry name" value="RNA_helicase_DEAD_Q_motif"/>
</dbReference>
<dbReference type="PANTHER" id="PTHR47958">
    <property type="entry name" value="ATP-DEPENDENT RNA HELICASE DBP3"/>
    <property type="match status" value="1"/>
</dbReference>
<dbReference type="Pfam" id="PF00270">
    <property type="entry name" value="DEAD"/>
    <property type="match status" value="1"/>
</dbReference>
<dbReference type="Pfam" id="PF00271">
    <property type="entry name" value="Helicase_C"/>
    <property type="match status" value="1"/>
</dbReference>
<dbReference type="SMART" id="SM00487">
    <property type="entry name" value="DEXDc"/>
    <property type="match status" value="1"/>
</dbReference>
<dbReference type="SMART" id="SM00490">
    <property type="entry name" value="HELICc"/>
    <property type="match status" value="1"/>
</dbReference>
<dbReference type="SUPFAM" id="SSF52540">
    <property type="entry name" value="P-loop containing nucleoside triphosphate hydrolases"/>
    <property type="match status" value="1"/>
</dbReference>
<dbReference type="PROSITE" id="PS00039">
    <property type="entry name" value="DEAD_ATP_HELICASE"/>
    <property type="match status" value="1"/>
</dbReference>
<dbReference type="PROSITE" id="PS51192">
    <property type="entry name" value="HELICASE_ATP_BIND_1"/>
    <property type="match status" value="1"/>
</dbReference>
<dbReference type="PROSITE" id="PS51194">
    <property type="entry name" value="HELICASE_CTER"/>
    <property type="match status" value="1"/>
</dbReference>
<dbReference type="PROSITE" id="PS51195">
    <property type="entry name" value="Q_MOTIF"/>
    <property type="match status" value="1"/>
</dbReference>